<comment type="function">
    <text evidence="2">DNA-binding protein involved in homologous recombination that acts by recruiting the MCM8-MCM9 helicase complex to sites of DNA damage to promote DNA repair synthesis.</text>
</comment>
<comment type="subunit">
    <text evidence="1 2">Interacts with MCM8; this interaction is necessary for MCM8-MCM9 helicase complex recruitment to DNA damage sites (By similarity). Interacts with RPA1; this interaction associates HROB with the RPA complex (By similarity).</text>
</comment>
<comment type="subcellular location">
    <subcellularLocation>
        <location evidence="2">Nucleus</location>
    </subcellularLocation>
    <subcellularLocation>
        <location evidence="2">Chromosome</location>
    </subcellularLocation>
    <text evidence="2">Localized to the sites of DNA damage.</text>
</comment>
<comment type="induction">
    <text evidence="4">By E2F1 and serum stimulation.</text>
</comment>
<accession>Q6GX86</accession>
<accession>Q6GX87</accession>
<name>HROB_RAT</name>
<dbReference type="EMBL" id="AY623029">
    <property type="protein sequence ID" value="AAT46046.1"/>
    <property type="molecule type" value="mRNA"/>
</dbReference>
<dbReference type="EMBL" id="AY623030">
    <property type="protein sequence ID" value="AAT46047.1"/>
    <property type="molecule type" value="mRNA"/>
</dbReference>
<dbReference type="RefSeq" id="NP_001017988.1">
    <property type="nucleotide sequence ID" value="NM_001017988.1"/>
</dbReference>
<dbReference type="FunCoup" id="Q6GX86">
    <property type="interactions" value="471"/>
</dbReference>
<dbReference type="STRING" id="10116.ENSRNOP00000075073"/>
<dbReference type="PhosphoSitePlus" id="Q6GX86"/>
<dbReference type="PaxDb" id="10116-ENSRNOP00000063602"/>
<dbReference type="Ensembl" id="ENSRNOT00000065182.2">
    <property type="protein sequence ID" value="ENSRNOP00000063602.1"/>
    <property type="gene ID" value="ENSRNOG00000020908.8"/>
</dbReference>
<dbReference type="GeneID" id="303566"/>
<dbReference type="KEGG" id="rno:303566"/>
<dbReference type="UCSC" id="RGD:1305385">
    <property type="organism name" value="rat"/>
</dbReference>
<dbReference type="AGR" id="RGD:1305385"/>
<dbReference type="CTD" id="78995"/>
<dbReference type="RGD" id="1305385">
    <property type="gene designation" value="Hrob"/>
</dbReference>
<dbReference type="eggNOG" id="ENOG502QV5E">
    <property type="taxonomic scope" value="Eukaryota"/>
</dbReference>
<dbReference type="GeneTree" id="ENSGT00400000022305"/>
<dbReference type="InParanoid" id="Q6GX86"/>
<dbReference type="PhylomeDB" id="Q6GX86"/>
<dbReference type="PRO" id="PR:Q6GX86"/>
<dbReference type="Proteomes" id="UP000002494">
    <property type="component" value="Chromosome 10"/>
</dbReference>
<dbReference type="Bgee" id="ENSRNOG00000020908">
    <property type="expression patterns" value="Expressed in testis and 14 other cell types or tissues"/>
</dbReference>
<dbReference type="ExpressionAtlas" id="Q6GX86">
    <property type="expression patterns" value="baseline and differential"/>
</dbReference>
<dbReference type="GO" id="GO:0005634">
    <property type="term" value="C:nucleus"/>
    <property type="evidence" value="ECO:0007669"/>
    <property type="project" value="UniProtKB-SubCell"/>
</dbReference>
<dbReference type="GO" id="GO:0090734">
    <property type="term" value="C:site of DNA damage"/>
    <property type="evidence" value="ECO:0000250"/>
    <property type="project" value="UniProtKB"/>
</dbReference>
<dbReference type="GO" id="GO:0003697">
    <property type="term" value="F:single-stranded DNA binding"/>
    <property type="evidence" value="ECO:0000250"/>
    <property type="project" value="UniProtKB"/>
</dbReference>
<dbReference type="GO" id="GO:0006974">
    <property type="term" value="P:DNA damage response"/>
    <property type="evidence" value="ECO:0000250"/>
    <property type="project" value="UniProtKB"/>
</dbReference>
<dbReference type="GO" id="GO:0000731">
    <property type="term" value="P:DNA synthesis involved in DNA repair"/>
    <property type="evidence" value="ECO:0000250"/>
    <property type="project" value="UniProtKB"/>
</dbReference>
<dbReference type="GO" id="GO:0007292">
    <property type="term" value="P:female gamete generation"/>
    <property type="evidence" value="ECO:0000250"/>
    <property type="project" value="UniProtKB"/>
</dbReference>
<dbReference type="GO" id="GO:0036297">
    <property type="term" value="P:interstrand cross-link repair"/>
    <property type="evidence" value="ECO:0000250"/>
    <property type="project" value="UniProtKB"/>
</dbReference>
<dbReference type="GO" id="GO:0048232">
    <property type="term" value="P:male gamete generation"/>
    <property type="evidence" value="ECO:0000250"/>
    <property type="project" value="UniProtKB"/>
</dbReference>
<dbReference type="GO" id="GO:0000725">
    <property type="term" value="P:recombinational repair"/>
    <property type="evidence" value="ECO:0007669"/>
    <property type="project" value="InterPro"/>
</dbReference>
<dbReference type="InterPro" id="IPR028045">
    <property type="entry name" value="HROB"/>
</dbReference>
<dbReference type="PANTHER" id="PTHR14523:SF1">
    <property type="entry name" value="HOMOLOGOUS RECOMBINATION OB-FOLD PROTEIN"/>
    <property type="match status" value="1"/>
</dbReference>
<dbReference type="PANTHER" id="PTHR14523">
    <property type="entry name" value="UNCHARACTERIZED PROTEIN C17ORF53 HOMOLOG"/>
    <property type="match status" value="1"/>
</dbReference>
<dbReference type="Pfam" id="PF15072">
    <property type="entry name" value="HROB"/>
    <property type="match status" value="1"/>
</dbReference>
<keyword id="KW-0158">Chromosome</keyword>
<keyword id="KW-0227">DNA damage</keyword>
<keyword id="KW-0233">DNA recombination</keyword>
<keyword id="KW-0234">DNA repair</keyword>
<keyword id="KW-0237">DNA synthesis</keyword>
<keyword id="KW-0238">DNA-binding</keyword>
<keyword id="KW-0488">Methylation</keyword>
<keyword id="KW-0539">Nucleus</keyword>
<keyword id="KW-0597">Phosphoprotein</keyword>
<keyword id="KW-1185">Reference proteome</keyword>
<evidence type="ECO:0000250" key="1">
    <source>
        <dbReference type="UniProtKB" id="Q32P12"/>
    </source>
</evidence>
<evidence type="ECO:0000250" key="2">
    <source>
        <dbReference type="UniProtKB" id="Q8N3J3"/>
    </source>
</evidence>
<evidence type="ECO:0000256" key="3">
    <source>
        <dbReference type="SAM" id="MobiDB-lite"/>
    </source>
</evidence>
<evidence type="ECO:0000269" key="4">
    <source>
    </source>
</evidence>
<evidence type="ECO:0000312" key="5">
    <source>
        <dbReference type="RGD" id="1305385"/>
    </source>
</evidence>
<organism>
    <name type="scientific">Rattus norvegicus</name>
    <name type="common">Rat</name>
    <dbReference type="NCBI Taxonomy" id="10116"/>
    <lineage>
        <taxon>Eukaryota</taxon>
        <taxon>Metazoa</taxon>
        <taxon>Chordata</taxon>
        <taxon>Craniata</taxon>
        <taxon>Vertebrata</taxon>
        <taxon>Euteleostomi</taxon>
        <taxon>Mammalia</taxon>
        <taxon>Eutheria</taxon>
        <taxon>Euarchontoglires</taxon>
        <taxon>Glires</taxon>
        <taxon>Rodentia</taxon>
        <taxon>Myomorpha</taxon>
        <taxon>Muroidea</taxon>
        <taxon>Muridae</taxon>
        <taxon>Murinae</taxon>
        <taxon>Rattus</taxon>
    </lineage>
</organism>
<proteinExistence type="evidence at transcript level"/>
<gene>
    <name evidence="5" type="primary">Hrob</name>
</gene>
<reference key="1">
    <citation type="journal article" date="2006" name="Oncogene">
        <title>Identification of novel E2F1 target genes regulated in cell cycle-dependent and independent manners.</title>
        <authorList>
            <person name="Iwanaga R."/>
            <person name="Komori H."/>
            <person name="Ishida S."/>
            <person name="Okamura N."/>
            <person name="Nakayama K."/>
            <person name="Nakayama K."/>
            <person name="Ohtani K."/>
        </authorList>
    </citation>
    <scope>NUCLEOTIDE SEQUENCE [LARGE SCALE MRNA]</scope>
    <scope>INDUCTION</scope>
</reference>
<feature type="chain" id="PRO_0000288094" description="Homologous recombination OB-fold protein">
    <location>
        <begin position="1"/>
        <end position="607"/>
    </location>
</feature>
<feature type="region of interest" description="Disordered" evidence="3">
    <location>
        <begin position="25"/>
        <end position="49"/>
    </location>
</feature>
<feature type="region of interest" description="Disordered" evidence="3">
    <location>
        <begin position="84"/>
        <end position="108"/>
    </location>
</feature>
<feature type="region of interest" description="Disordered" evidence="3">
    <location>
        <begin position="196"/>
        <end position="308"/>
    </location>
</feature>
<feature type="region of interest" description="Disordered" evidence="3">
    <location>
        <begin position="531"/>
        <end position="581"/>
    </location>
</feature>
<feature type="compositionally biased region" description="Polar residues" evidence="3">
    <location>
        <begin position="27"/>
        <end position="49"/>
    </location>
</feature>
<feature type="compositionally biased region" description="Polar residues" evidence="3">
    <location>
        <begin position="92"/>
        <end position="108"/>
    </location>
</feature>
<feature type="compositionally biased region" description="Low complexity" evidence="3">
    <location>
        <begin position="295"/>
        <end position="308"/>
    </location>
</feature>
<feature type="compositionally biased region" description="Acidic residues" evidence="3">
    <location>
        <begin position="570"/>
        <end position="581"/>
    </location>
</feature>
<feature type="modified residue" description="Phosphoserine" evidence="2">
    <location>
        <position position="30"/>
    </location>
</feature>
<feature type="modified residue" description="Asymmetric dimethylarginine" evidence="2">
    <location>
        <position position="281"/>
    </location>
</feature>
<protein>
    <recommendedName>
        <fullName>Homologous recombination OB-fold protein</fullName>
    </recommendedName>
</protein>
<sequence>MDFLSALENAENHIVSALPGDAVCLRPNSSRPQETPQAHSSKLSPSYPASNRSVLGLCFPTSRMPETIKEPPCKGAMFLRPVSISSSSSGSQQRMTGTKVSQESSGRQSSAAHSGFIFESCQHGIGDFETLDQDEFDKALASMEFEGAGLEPEVNRGASQILPAKHCEDPVLAKKARVADLSGSFQEGPIVHCRKPWPSLRPTTATGGLPVPATSDISTSHQRGSPVPAPQYSPVAGRTLQNGPQNYVPGQPLQSPRAWSSGKPRFSGPQCPHSSSAAFCRGPSPSRAPVSSVESPFSTPRSTSTTVTQPALQTPVVTNHLVQLVTATNRTPQQPSRPSIRAKTRRFPGPAGLLPHQHSGENLEEIMVSTPQTPTHGALAKFQTEIVTSSQGSVEEDFGRGPWLTMKSALGLDEGDPTCFLYTYSIVMVLRKAALKQLPRNKVPNMAVMIKSLTRSTMDASVVFKDPTGEMLGTVHRVLLETHQNELKPGSVLLLKQIGVFSPSLRNHYLNVTPNNLVHIYSLDSGDGDFLKPPQPLPKDLGNSHGSLQPDVAAEPTQGLRTAQNPPASPEEELPEADDLDGLLSELPEDFFCEPSGWSCLKTGHPP</sequence>